<dbReference type="EMBL" id="AL596170">
    <property type="protein sequence ID" value="CAC97221.1"/>
    <property type="molecule type" value="Genomic_DNA"/>
</dbReference>
<dbReference type="PIR" id="AE1681">
    <property type="entry name" value="AE1681"/>
</dbReference>
<dbReference type="RefSeq" id="WP_003763032.1">
    <property type="nucleotide sequence ID" value="NC_003212.1"/>
</dbReference>
<dbReference type="SMR" id="Q92AD1"/>
<dbReference type="STRING" id="272626.gene:17566349"/>
<dbReference type="GeneID" id="93235329"/>
<dbReference type="KEGG" id="lin:lin1991"/>
<dbReference type="eggNOG" id="COG1321">
    <property type="taxonomic scope" value="Bacteria"/>
</dbReference>
<dbReference type="HOGENOM" id="CLU_069532_3_0_9"/>
<dbReference type="OrthoDB" id="9791355at2"/>
<dbReference type="Proteomes" id="UP000002513">
    <property type="component" value="Chromosome"/>
</dbReference>
<dbReference type="GO" id="GO:0005737">
    <property type="term" value="C:cytoplasm"/>
    <property type="evidence" value="ECO:0007669"/>
    <property type="project" value="UniProtKB-SubCell"/>
</dbReference>
<dbReference type="GO" id="GO:0003677">
    <property type="term" value="F:DNA binding"/>
    <property type="evidence" value="ECO:0007669"/>
    <property type="project" value="UniProtKB-KW"/>
</dbReference>
<dbReference type="GO" id="GO:0003700">
    <property type="term" value="F:DNA-binding transcription factor activity"/>
    <property type="evidence" value="ECO:0007669"/>
    <property type="project" value="UniProtKB-UniRule"/>
</dbReference>
<dbReference type="GO" id="GO:0030145">
    <property type="term" value="F:manganese ion binding"/>
    <property type="evidence" value="ECO:0007669"/>
    <property type="project" value="UniProtKB-UniRule"/>
</dbReference>
<dbReference type="GO" id="GO:0046983">
    <property type="term" value="F:protein dimerization activity"/>
    <property type="evidence" value="ECO:0007669"/>
    <property type="project" value="InterPro"/>
</dbReference>
<dbReference type="GO" id="GO:0030026">
    <property type="term" value="P:intracellular manganese ion homeostasis"/>
    <property type="evidence" value="ECO:0007669"/>
    <property type="project" value="UniProtKB-UniRule"/>
</dbReference>
<dbReference type="FunFam" id="1.10.10.10:FF:000189">
    <property type="entry name" value="HTH-type transcriptional regulator MntR"/>
    <property type="match status" value="1"/>
</dbReference>
<dbReference type="Gene3D" id="1.10.60.10">
    <property type="entry name" value="Iron dependent repressor, metal binding and dimerisation domain"/>
    <property type="match status" value="1"/>
</dbReference>
<dbReference type="Gene3D" id="1.10.10.10">
    <property type="entry name" value="Winged helix-like DNA-binding domain superfamily/Winged helix DNA-binding domain"/>
    <property type="match status" value="1"/>
</dbReference>
<dbReference type="HAMAP" id="MF_00732">
    <property type="entry name" value="HTH_MntR"/>
    <property type="match status" value="1"/>
</dbReference>
<dbReference type="InterPro" id="IPR050536">
    <property type="entry name" value="DtxR_MntR_Metal-Reg"/>
</dbReference>
<dbReference type="InterPro" id="IPR001367">
    <property type="entry name" value="Fe_dep_repressor"/>
</dbReference>
<dbReference type="InterPro" id="IPR036421">
    <property type="entry name" value="Fe_dep_repressor_sf"/>
</dbReference>
<dbReference type="InterPro" id="IPR022687">
    <property type="entry name" value="HTH_DTXR"/>
</dbReference>
<dbReference type="InterPro" id="IPR022897">
    <property type="entry name" value="HTH_tscrpt_reg_MntR"/>
</dbReference>
<dbReference type="InterPro" id="IPR022689">
    <property type="entry name" value="Iron_dep_repressor"/>
</dbReference>
<dbReference type="InterPro" id="IPR036388">
    <property type="entry name" value="WH-like_DNA-bd_sf"/>
</dbReference>
<dbReference type="InterPro" id="IPR036390">
    <property type="entry name" value="WH_DNA-bd_sf"/>
</dbReference>
<dbReference type="NCBIfam" id="NF003025">
    <property type="entry name" value="PRK03902.1"/>
    <property type="match status" value="1"/>
</dbReference>
<dbReference type="PANTHER" id="PTHR33238">
    <property type="entry name" value="IRON (METAL) DEPENDENT REPRESSOR, DTXR FAMILY"/>
    <property type="match status" value="1"/>
</dbReference>
<dbReference type="PANTHER" id="PTHR33238:SF11">
    <property type="entry name" value="TRANSCRIPTIONAL REGULATOR MNTR"/>
    <property type="match status" value="1"/>
</dbReference>
<dbReference type="Pfam" id="PF02742">
    <property type="entry name" value="Fe_dep_repr_C"/>
    <property type="match status" value="1"/>
</dbReference>
<dbReference type="Pfam" id="PF01325">
    <property type="entry name" value="Fe_dep_repress"/>
    <property type="match status" value="1"/>
</dbReference>
<dbReference type="SMART" id="SM00529">
    <property type="entry name" value="HTH_DTXR"/>
    <property type="match status" value="1"/>
</dbReference>
<dbReference type="SUPFAM" id="SSF47979">
    <property type="entry name" value="Iron-dependent repressor protein, dimerization domain"/>
    <property type="match status" value="1"/>
</dbReference>
<dbReference type="SUPFAM" id="SSF46785">
    <property type="entry name" value="Winged helix' DNA-binding domain"/>
    <property type="match status" value="1"/>
</dbReference>
<dbReference type="PROSITE" id="PS50944">
    <property type="entry name" value="HTH_DTXR"/>
    <property type="match status" value="1"/>
</dbReference>
<name>MNTR_LISIN</name>
<comment type="function">
    <text evidence="1">Central regulator of manganese homeostasis.</text>
</comment>
<comment type="activity regulation">
    <text evidence="1">DNA binding is strongly activated by Mn(2+).</text>
</comment>
<comment type="subunit">
    <text evidence="1">Homodimer.</text>
</comment>
<comment type="subcellular location">
    <subcellularLocation>
        <location evidence="1">Cytoplasm</location>
    </subcellularLocation>
</comment>
<comment type="similarity">
    <text evidence="1">Belongs to the DtxR/MntR family.</text>
</comment>
<gene>
    <name evidence="1" type="primary">mntR</name>
    <name type="ordered locus">lin1991</name>
</gene>
<accession>Q92AD1</accession>
<proteinExistence type="inferred from homology"/>
<sequence>MPTPSMEDYIEKIYSLIETKGYARVSDIADELFVHPSSVTKMVQKLDKDEYLIYEKYRGLILTPKGTQMGKRLLERHALLESFLSIIGVDPSHIYHDVEGIEHHLSWNSIDRIGDVVQFFENHPDALKTLKEMDPTKPDTKE</sequence>
<evidence type="ECO:0000255" key="1">
    <source>
        <dbReference type="HAMAP-Rule" id="MF_00732"/>
    </source>
</evidence>
<reference key="1">
    <citation type="journal article" date="2001" name="Science">
        <title>Comparative genomics of Listeria species.</title>
        <authorList>
            <person name="Glaser P."/>
            <person name="Frangeul L."/>
            <person name="Buchrieser C."/>
            <person name="Rusniok C."/>
            <person name="Amend A."/>
            <person name="Baquero F."/>
            <person name="Berche P."/>
            <person name="Bloecker H."/>
            <person name="Brandt P."/>
            <person name="Chakraborty T."/>
            <person name="Charbit A."/>
            <person name="Chetouani F."/>
            <person name="Couve E."/>
            <person name="de Daruvar A."/>
            <person name="Dehoux P."/>
            <person name="Domann E."/>
            <person name="Dominguez-Bernal G."/>
            <person name="Duchaud E."/>
            <person name="Durant L."/>
            <person name="Dussurget O."/>
            <person name="Entian K.-D."/>
            <person name="Fsihi H."/>
            <person name="Garcia-del Portillo F."/>
            <person name="Garrido P."/>
            <person name="Gautier L."/>
            <person name="Goebel W."/>
            <person name="Gomez-Lopez N."/>
            <person name="Hain T."/>
            <person name="Hauf J."/>
            <person name="Jackson D."/>
            <person name="Jones L.-M."/>
            <person name="Kaerst U."/>
            <person name="Kreft J."/>
            <person name="Kuhn M."/>
            <person name="Kunst F."/>
            <person name="Kurapkat G."/>
            <person name="Madueno E."/>
            <person name="Maitournam A."/>
            <person name="Mata Vicente J."/>
            <person name="Ng E."/>
            <person name="Nedjari H."/>
            <person name="Nordsiek G."/>
            <person name="Novella S."/>
            <person name="de Pablos B."/>
            <person name="Perez-Diaz J.-C."/>
            <person name="Purcell R."/>
            <person name="Remmel B."/>
            <person name="Rose M."/>
            <person name="Schlueter T."/>
            <person name="Simoes N."/>
            <person name="Tierrez A."/>
            <person name="Vazquez-Boland J.-A."/>
            <person name="Voss H."/>
            <person name="Wehland J."/>
            <person name="Cossart P."/>
        </authorList>
    </citation>
    <scope>NUCLEOTIDE SEQUENCE [LARGE SCALE GENOMIC DNA]</scope>
    <source>
        <strain>ATCC BAA-680 / CLIP 11262</strain>
    </source>
</reference>
<keyword id="KW-0010">Activator</keyword>
<keyword id="KW-0963">Cytoplasm</keyword>
<keyword id="KW-0238">DNA-binding</keyword>
<keyword id="KW-0464">Manganese</keyword>
<keyword id="KW-0479">Metal-binding</keyword>
<keyword id="KW-0678">Repressor</keyword>
<keyword id="KW-0804">Transcription</keyword>
<keyword id="KW-0805">Transcription regulation</keyword>
<organism>
    <name type="scientific">Listeria innocua serovar 6a (strain ATCC BAA-680 / CLIP 11262)</name>
    <dbReference type="NCBI Taxonomy" id="272626"/>
    <lineage>
        <taxon>Bacteria</taxon>
        <taxon>Bacillati</taxon>
        <taxon>Bacillota</taxon>
        <taxon>Bacilli</taxon>
        <taxon>Bacillales</taxon>
        <taxon>Listeriaceae</taxon>
        <taxon>Listeria</taxon>
    </lineage>
</organism>
<protein>
    <recommendedName>
        <fullName evidence="1">HTH-type transcriptional regulator MntR</fullName>
    </recommendedName>
    <alternativeName>
        <fullName evidence="1">Manganese transport regulator</fullName>
    </alternativeName>
</protein>
<feature type="chain" id="PRO_0000201119" description="HTH-type transcriptional regulator MntR">
    <location>
        <begin position="1"/>
        <end position="142"/>
    </location>
</feature>
<feature type="domain" description="HTH dtxR-type" evidence="1">
    <location>
        <begin position="1"/>
        <end position="63"/>
    </location>
</feature>
<feature type="binding site" evidence="1">
    <location>
        <position position="8"/>
    </location>
    <ligand>
        <name>Mn(2+)</name>
        <dbReference type="ChEBI" id="CHEBI:29035"/>
        <label>1</label>
    </ligand>
</feature>
<feature type="binding site" evidence="1">
    <location>
        <position position="11"/>
    </location>
    <ligand>
        <name>Mn(2+)</name>
        <dbReference type="ChEBI" id="CHEBI:29035"/>
        <label>2</label>
    </ligand>
</feature>
<feature type="binding site" evidence="1">
    <location>
        <position position="77"/>
    </location>
    <ligand>
        <name>Mn(2+)</name>
        <dbReference type="ChEBI" id="CHEBI:29035"/>
        <label>2</label>
    </ligand>
</feature>
<feature type="binding site" evidence="1">
    <location>
        <position position="99"/>
    </location>
    <ligand>
        <name>Mn(2+)</name>
        <dbReference type="ChEBI" id="CHEBI:29035"/>
        <label>1</label>
    </ligand>
</feature>
<feature type="binding site" evidence="1">
    <location>
        <position position="99"/>
    </location>
    <ligand>
        <name>Mn(2+)</name>
        <dbReference type="ChEBI" id="CHEBI:29035"/>
        <label>2</label>
    </ligand>
</feature>
<feature type="binding site" evidence="1">
    <location>
        <position position="102"/>
    </location>
    <ligand>
        <name>Mn(2+)</name>
        <dbReference type="ChEBI" id="CHEBI:29035"/>
        <label>1</label>
    </ligand>
</feature>
<feature type="binding site" evidence="1">
    <location>
        <position position="102"/>
    </location>
    <ligand>
        <name>Mn(2+)</name>
        <dbReference type="ChEBI" id="CHEBI:29035"/>
        <label>2</label>
    </ligand>
</feature>
<feature type="binding site" evidence="1">
    <location>
        <position position="103"/>
    </location>
    <ligand>
        <name>Mn(2+)</name>
        <dbReference type="ChEBI" id="CHEBI:29035"/>
        <label>1</label>
    </ligand>
</feature>